<keyword id="KW-0002">3D-structure</keyword>
<keyword id="KW-0249">Electron transport</keyword>
<keyword id="KW-0472">Membrane</keyword>
<keyword id="KW-0496">Mitochondrion</keyword>
<keyword id="KW-0999">Mitochondrion inner membrane</keyword>
<keyword id="KW-1185">Reference proteome</keyword>
<keyword id="KW-0679">Respiratory chain</keyword>
<keyword id="KW-0812">Transmembrane</keyword>
<keyword id="KW-1133">Transmembrane helix</keyword>
<keyword id="KW-0813">Transport</keyword>
<protein>
    <recommendedName>
        <fullName>NADH dehydrogenase [ubiquinone] 1 alpha subcomplex subunit 1</fullName>
    </recommendedName>
</protein>
<accession>Q9C9Z5</accession>
<accession>Q84MD9</accession>
<gene>
    <name type="ordered locus">At3g08610</name>
    <name type="ORF">F17O14.8</name>
</gene>
<sequence length="65" mass="7338">MSLVWLEAMLPLGIIGGMLCIMGNSQYYIHKAYHGRPKHIGHDEWDVAMERRDKKVVEKAAAPSS</sequence>
<organism>
    <name type="scientific">Arabidopsis thaliana</name>
    <name type="common">Mouse-ear cress</name>
    <dbReference type="NCBI Taxonomy" id="3702"/>
    <lineage>
        <taxon>Eukaryota</taxon>
        <taxon>Viridiplantae</taxon>
        <taxon>Streptophyta</taxon>
        <taxon>Embryophyta</taxon>
        <taxon>Tracheophyta</taxon>
        <taxon>Spermatophyta</taxon>
        <taxon>Magnoliopsida</taxon>
        <taxon>eudicotyledons</taxon>
        <taxon>Gunneridae</taxon>
        <taxon>Pentapetalae</taxon>
        <taxon>rosids</taxon>
        <taxon>malvids</taxon>
        <taxon>Brassicales</taxon>
        <taxon>Brassicaceae</taxon>
        <taxon>Camelineae</taxon>
        <taxon>Arabidopsis</taxon>
    </lineage>
</organism>
<name>NDUA1_ARATH</name>
<feature type="chain" id="PRO_0000410930" description="NADH dehydrogenase [ubiquinone] 1 alpha subcomplex subunit 1">
    <location>
        <begin position="1"/>
        <end position="65"/>
    </location>
</feature>
<feature type="transmembrane region" description="Helical" evidence="2">
    <location>
        <begin position="3"/>
        <end position="23"/>
    </location>
</feature>
<feature type="helix" evidence="4">
    <location>
        <begin position="6"/>
        <end position="34"/>
    </location>
</feature>
<feature type="helix" evidence="4">
    <location>
        <begin position="44"/>
        <end position="58"/>
    </location>
</feature>
<reference key="1">
    <citation type="journal article" date="2000" name="Nature">
        <title>Sequence and analysis of chromosome 3 of the plant Arabidopsis thaliana.</title>
        <authorList>
            <person name="Salanoubat M."/>
            <person name="Lemcke K."/>
            <person name="Rieger M."/>
            <person name="Ansorge W."/>
            <person name="Unseld M."/>
            <person name="Fartmann B."/>
            <person name="Valle G."/>
            <person name="Bloecker H."/>
            <person name="Perez-Alonso M."/>
            <person name="Obermaier B."/>
            <person name="Delseny M."/>
            <person name="Boutry M."/>
            <person name="Grivell L.A."/>
            <person name="Mache R."/>
            <person name="Puigdomenech P."/>
            <person name="De Simone V."/>
            <person name="Choisne N."/>
            <person name="Artiguenave F."/>
            <person name="Robert C."/>
            <person name="Brottier P."/>
            <person name="Wincker P."/>
            <person name="Cattolico L."/>
            <person name="Weissenbach J."/>
            <person name="Saurin W."/>
            <person name="Quetier F."/>
            <person name="Schaefer M."/>
            <person name="Mueller-Auer S."/>
            <person name="Gabel C."/>
            <person name="Fuchs M."/>
            <person name="Benes V."/>
            <person name="Wurmbach E."/>
            <person name="Drzonek H."/>
            <person name="Erfle H."/>
            <person name="Jordan N."/>
            <person name="Bangert S."/>
            <person name="Wiedelmann R."/>
            <person name="Kranz H."/>
            <person name="Voss H."/>
            <person name="Holland R."/>
            <person name="Brandt P."/>
            <person name="Nyakatura G."/>
            <person name="Vezzi A."/>
            <person name="D'Angelo M."/>
            <person name="Pallavicini A."/>
            <person name="Toppo S."/>
            <person name="Simionati B."/>
            <person name="Conrad A."/>
            <person name="Hornischer K."/>
            <person name="Kauer G."/>
            <person name="Loehnert T.-H."/>
            <person name="Nordsiek G."/>
            <person name="Reichelt J."/>
            <person name="Scharfe M."/>
            <person name="Schoen O."/>
            <person name="Bargues M."/>
            <person name="Terol J."/>
            <person name="Climent J."/>
            <person name="Navarro P."/>
            <person name="Collado C."/>
            <person name="Perez-Perez A."/>
            <person name="Ottenwaelder B."/>
            <person name="Duchemin D."/>
            <person name="Cooke R."/>
            <person name="Laudie M."/>
            <person name="Berger-Llauro C."/>
            <person name="Purnelle B."/>
            <person name="Masuy D."/>
            <person name="de Haan M."/>
            <person name="Maarse A.C."/>
            <person name="Alcaraz J.-P."/>
            <person name="Cottet A."/>
            <person name="Casacuberta E."/>
            <person name="Monfort A."/>
            <person name="Argiriou A."/>
            <person name="Flores M."/>
            <person name="Liguori R."/>
            <person name="Vitale D."/>
            <person name="Mannhaupt G."/>
            <person name="Haase D."/>
            <person name="Schoof H."/>
            <person name="Rudd S."/>
            <person name="Zaccaria P."/>
            <person name="Mewes H.-W."/>
            <person name="Mayer K.F.X."/>
            <person name="Kaul S."/>
            <person name="Town C.D."/>
            <person name="Koo H.L."/>
            <person name="Tallon L.J."/>
            <person name="Jenkins J."/>
            <person name="Rooney T."/>
            <person name="Rizzo M."/>
            <person name="Walts A."/>
            <person name="Utterback T."/>
            <person name="Fujii C.Y."/>
            <person name="Shea T.P."/>
            <person name="Creasy T.H."/>
            <person name="Haas B."/>
            <person name="Maiti R."/>
            <person name="Wu D."/>
            <person name="Peterson J."/>
            <person name="Van Aken S."/>
            <person name="Pai G."/>
            <person name="Militscher J."/>
            <person name="Sellers P."/>
            <person name="Gill J.E."/>
            <person name="Feldblyum T.V."/>
            <person name="Preuss D."/>
            <person name="Lin X."/>
            <person name="Nierman W.C."/>
            <person name="Salzberg S.L."/>
            <person name="White O."/>
            <person name="Venter J.C."/>
            <person name="Fraser C.M."/>
            <person name="Kaneko T."/>
            <person name="Nakamura Y."/>
            <person name="Sato S."/>
            <person name="Kato T."/>
            <person name="Asamizu E."/>
            <person name="Sasamoto S."/>
            <person name="Kimura T."/>
            <person name="Idesawa K."/>
            <person name="Kawashima K."/>
            <person name="Kishida Y."/>
            <person name="Kiyokawa C."/>
            <person name="Kohara M."/>
            <person name="Matsumoto M."/>
            <person name="Matsuno A."/>
            <person name="Muraki A."/>
            <person name="Nakayama S."/>
            <person name="Nakazaki N."/>
            <person name="Shinpo S."/>
            <person name="Takeuchi C."/>
            <person name="Wada T."/>
            <person name="Watanabe A."/>
            <person name="Yamada M."/>
            <person name="Yasuda M."/>
            <person name="Tabata S."/>
        </authorList>
    </citation>
    <scope>NUCLEOTIDE SEQUENCE [LARGE SCALE GENOMIC DNA]</scope>
    <source>
        <strain>cv. Columbia</strain>
    </source>
</reference>
<reference key="2">
    <citation type="journal article" date="2017" name="Plant J.">
        <title>Araport11: a complete reannotation of the Arabidopsis thaliana reference genome.</title>
        <authorList>
            <person name="Cheng C.Y."/>
            <person name="Krishnakumar V."/>
            <person name="Chan A.P."/>
            <person name="Thibaud-Nissen F."/>
            <person name="Schobel S."/>
            <person name="Town C.D."/>
        </authorList>
    </citation>
    <scope>GENOME REANNOTATION</scope>
    <source>
        <strain>cv. Columbia</strain>
    </source>
</reference>
<reference key="3">
    <citation type="journal article" date="2003" name="Science">
        <title>Empirical analysis of transcriptional activity in the Arabidopsis genome.</title>
        <authorList>
            <person name="Yamada K."/>
            <person name="Lim J."/>
            <person name="Dale J.M."/>
            <person name="Chen H."/>
            <person name="Shinn P."/>
            <person name="Palm C.J."/>
            <person name="Southwick A.M."/>
            <person name="Wu H.C."/>
            <person name="Kim C.J."/>
            <person name="Nguyen M."/>
            <person name="Pham P.K."/>
            <person name="Cheuk R.F."/>
            <person name="Karlin-Newmann G."/>
            <person name="Liu S.X."/>
            <person name="Lam B."/>
            <person name="Sakano H."/>
            <person name="Wu T."/>
            <person name="Yu G."/>
            <person name="Miranda M."/>
            <person name="Quach H.L."/>
            <person name="Tripp M."/>
            <person name="Chang C.H."/>
            <person name="Lee J.M."/>
            <person name="Toriumi M.J."/>
            <person name="Chan M.M."/>
            <person name="Tang C.C."/>
            <person name="Onodera C.S."/>
            <person name="Deng J.M."/>
            <person name="Akiyama K."/>
            <person name="Ansari Y."/>
            <person name="Arakawa T."/>
            <person name="Banh J."/>
            <person name="Banno F."/>
            <person name="Bowser L."/>
            <person name="Brooks S.Y."/>
            <person name="Carninci P."/>
            <person name="Chao Q."/>
            <person name="Choy N."/>
            <person name="Enju A."/>
            <person name="Goldsmith A.D."/>
            <person name="Gurjal M."/>
            <person name="Hansen N.F."/>
            <person name="Hayashizaki Y."/>
            <person name="Johnson-Hopson C."/>
            <person name="Hsuan V.W."/>
            <person name="Iida K."/>
            <person name="Karnes M."/>
            <person name="Khan S."/>
            <person name="Koesema E."/>
            <person name="Ishida J."/>
            <person name="Jiang P.X."/>
            <person name="Jones T."/>
            <person name="Kawai J."/>
            <person name="Kamiya A."/>
            <person name="Meyers C."/>
            <person name="Nakajima M."/>
            <person name="Narusaka M."/>
            <person name="Seki M."/>
            <person name="Sakurai T."/>
            <person name="Satou M."/>
            <person name="Tamse R."/>
            <person name="Vaysberg M."/>
            <person name="Wallender E.K."/>
            <person name="Wong C."/>
            <person name="Yamamura Y."/>
            <person name="Yuan S."/>
            <person name="Shinozaki K."/>
            <person name="Davis R.W."/>
            <person name="Theologis A."/>
            <person name="Ecker J.R."/>
        </authorList>
    </citation>
    <scope>NUCLEOTIDE SEQUENCE [LARGE SCALE MRNA]</scope>
    <source>
        <strain>cv. Columbia</strain>
    </source>
</reference>
<reference key="4">
    <citation type="submission" date="2006-07" db="EMBL/GenBank/DDBJ databases">
        <title>Large-scale analysis of RIKEN Arabidopsis full-length (RAFL) cDNAs.</title>
        <authorList>
            <person name="Totoki Y."/>
            <person name="Seki M."/>
            <person name="Ishida J."/>
            <person name="Nakajima M."/>
            <person name="Enju A."/>
            <person name="Kamiya A."/>
            <person name="Narusaka M."/>
            <person name="Shin-i T."/>
            <person name="Nakagawa M."/>
            <person name="Sakamoto N."/>
            <person name="Oishi K."/>
            <person name="Kohara Y."/>
            <person name="Kobayashi M."/>
            <person name="Toyoda A."/>
            <person name="Sakaki Y."/>
            <person name="Sakurai T."/>
            <person name="Iida K."/>
            <person name="Akiyama K."/>
            <person name="Satou M."/>
            <person name="Toyoda T."/>
            <person name="Konagaya A."/>
            <person name="Carninci P."/>
            <person name="Kawai J."/>
            <person name="Hayashizaki Y."/>
            <person name="Shinozaki K."/>
        </authorList>
    </citation>
    <scope>NUCLEOTIDE SEQUENCE [LARGE SCALE MRNA]</scope>
    <source>
        <strain>cv. Columbia</strain>
    </source>
</reference>
<reference key="5">
    <citation type="submission" date="2002-03" db="EMBL/GenBank/DDBJ databases">
        <title>Full-length cDNA from Arabidopsis thaliana.</title>
        <authorList>
            <person name="Brover V.V."/>
            <person name="Troukhan M.E."/>
            <person name="Alexandrov N.A."/>
            <person name="Lu Y.-P."/>
            <person name="Flavell R.B."/>
            <person name="Feldmann K.A."/>
        </authorList>
    </citation>
    <scope>NUCLEOTIDE SEQUENCE [LARGE SCALE MRNA]</scope>
</reference>
<evidence type="ECO:0000250" key="1"/>
<evidence type="ECO:0000255" key="2"/>
<evidence type="ECO:0000305" key="3"/>
<evidence type="ECO:0007829" key="4">
    <source>
        <dbReference type="PDB" id="8BEF"/>
    </source>
</evidence>
<comment type="function">
    <text evidence="1">Accessory subunit of the mitochondrial membrane respiratory chain NADH dehydrogenase (Complex I), that is believed not to be involved in catalysis. Complex I functions in the transfer of electrons from NADH to the respiratory chain. The immediate electron acceptor for the enzyme is believed to be ubiquinone (By similarity).</text>
</comment>
<comment type="subunit">
    <text>Complex I is composed of at least 49 different subunits.</text>
</comment>
<comment type="subcellular location">
    <subcellularLocation>
        <location evidence="1">Mitochondrion inner membrane</location>
        <topology evidence="1">Single-pass membrane protein</topology>
        <orientation evidence="1">Matrix side</orientation>
    </subcellularLocation>
</comment>
<comment type="similarity">
    <text evidence="3">Belongs to the complex I NDUFA1 subunit family.</text>
</comment>
<comment type="sequence caution" evidence="3">
    <conflict type="erroneous initiation">
        <sequence resource="EMBL-CDS" id="AAP21180"/>
    </conflict>
    <text>Extended N-terminus.</text>
</comment>
<dbReference type="EMBL" id="AC012562">
    <property type="protein sequence ID" value="AAG51367.1"/>
    <property type="molecule type" value="Genomic_DNA"/>
</dbReference>
<dbReference type="EMBL" id="CP002686">
    <property type="protein sequence ID" value="AEE74653.1"/>
    <property type="molecule type" value="Genomic_DNA"/>
</dbReference>
<dbReference type="EMBL" id="BT006372">
    <property type="protein sequence ID" value="AAP21180.1"/>
    <property type="status" value="ALT_INIT"/>
    <property type="molecule type" value="mRNA"/>
</dbReference>
<dbReference type="EMBL" id="AK220620">
    <property type="protein sequence ID" value="BAD95019.1"/>
    <property type="molecule type" value="mRNA"/>
</dbReference>
<dbReference type="EMBL" id="AK227324">
    <property type="protein sequence ID" value="BAE99338.1"/>
    <property type="molecule type" value="mRNA"/>
</dbReference>
<dbReference type="EMBL" id="AY088759">
    <property type="protein sequence ID" value="AAM67347.1"/>
    <property type="molecule type" value="mRNA"/>
</dbReference>
<dbReference type="RefSeq" id="NP_566330.1">
    <property type="nucleotide sequence ID" value="NM_111695.3"/>
</dbReference>
<dbReference type="PDB" id="7A23">
    <property type="method" value="EM"/>
    <property type="resolution" value="3.70 A"/>
    <property type="chains" value="V=1-65"/>
</dbReference>
<dbReference type="PDB" id="7A24">
    <property type="method" value="EM"/>
    <property type="resolution" value="3.80 A"/>
    <property type="chains" value="V=1-65"/>
</dbReference>
<dbReference type="PDB" id="7AQQ">
    <property type="method" value="EM"/>
    <property type="resolution" value="3.06 A"/>
    <property type="chains" value="a=1-65"/>
</dbReference>
<dbReference type="PDB" id="7AR7">
    <property type="method" value="EM"/>
    <property type="resolution" value="3.72 A"/>
    <property type="chains" value="a=3-60"/>
</dbReference>
<dbReference type="PDB" id="7AR8">
    <property type="method" value="EM"/>
    <property type="resolution" value="3.53 A"/>
    <property type="chains" value="a=1-65"/>
</dbReference>
<dbReference type="PDB" id="7ARB">
    <property type="method" value="EM"/>
    <property type="resolution" value="3.41 A"/>
    <property type="chains" value="a=1-65"/>
</dbReference>
<dbReference type="PDB" id="8BEF">
    <property type="method" value="EM"/>
    <property type="resolution" value="2.13 A"/>
    <property type="chains" value="a=1-65"/>
</dbReference>
<dbReference type="PDB" id="8BPX">
    <property type="method" value="EM"/>
    <property type="resolution" value="2.09 A"/>
    <property type="chains" value="a=1-65"/>
</dbReference>
<dbReference type="PDB" id="8BQ5">
    <property type="method" value="EM"/>
    <property type="resolution" value="2.73 A"/>
    <property type="chains" value="a=1-65"/>
</dbReference>
<dbReference type="PDB" id="8BQ6">
    <property type="method" value="EM"/>
    <property type="resolution" value="2.80 A"/>
    <property type="chains" value="a=1-65"/>
</dbReference>
<dbReference type="PDBsum" id="7A23"/>
<dbReference type="PDBsum" id="7A24"/>
<dbReference type="PDBsum" id="7AQQ"/>
<dbReference type="PDBsum" id="7AR7"/>
<dbReference type="PDBsum" id="7AR8"/>
<dbReference type="PDBsum" id="7ARB"/>
<dbReference type="PDBsum" id="8BEF"/>
<dbReference type="PDBsum" id="8BPX"/>
<dbReference type="PDBsum" id="8BQ5"/>
<dbReference type="PDBsum" id="8BQ6"/>
<dbReference type="EMDB" id="EMD-11872"/>
<dbReference type="EMDB" id="EMD-11875"/>
<dbReference type="EMDB" id="EMD-11876"/>
<dbReference type="EMDB" id="EMD-11878"/>
<dbReference type="EMDB" id="EMD-16000"/>
<dbReference type="EMDB" id="EMD-16168"/>
<dbReference type="EMDB" id="EMD-16171"/>
<dbReference type="EMDB" id="EMD-16172"/>
<dbReference type="SMR" id="Q9C9Z5"/>
<dbReference type="FunCoup" id="Q9C9Z5">
    <property type="interactions" value="849"/>
</dbReference>
<dbReference type="IntAct" id="Q9C9Z5">
    <property type="interactions" value="2"/>
</dbReference>
<dbReference type="STRING" id="3702.Q9C9Z5"/>
<dbReference type="TCDB" id="3.D.1.6.3">
    <property type="family name" value="the h+ or na+-translocating nadh dehydrogenase (ndh) family"/>
</dbReference>
<dbReference type="PaxDb" id="3702-AT3G08610.1"/>
<dbReference type="ProteomicsDB" id="251302"/>
<dbReference type="EnsemblPlants" id="AT3G08610.1">
    <property type="protein sequence ID" value="AT3G08610.1"/>
    <property type="gene ID" value="AT3G08610"/>
</dbReference>
<dbReference type="GeneID" id="820008"/>
<dbReference type="Gramene" id="AT3G08610.1">
    <property type="protein sequence ID" value="AT3G08610.1"/>
    <property type="gene ID" value="AT3G08610"/>
</dbReference>
<dbReference type="KEGG" id="ath:AT3G08610"/>
<dbReference type="Araport" id="AT3G08610"/>
<dbReference type="TAIR" id="AT3G08610"/>
<dbReference type="eggNOG" id="ENOG502SGWI">
    <property type="taxonomic scope" value="Eukaryota"/>
</dbReference>
<dbReference type="HOGENOM" id="CLU_206164_0_0_1"/>
<dbReference type="InParanoid" id="Q9C9Z5"/>
<dbReference type="OMA" id="MIWLEAV"/>
<dbReference type="OrthoDB" id="1920692at2759"/>
<dbReference type="PhylomeDB" id="Q9C9Z5"/>
<dbReference type="BioCyc" id="ARA:AT3G08610-MONOMER"/>
<dbReference type="BioCyc" id="MetaCyc:AT3G08610-MONOMER"/>
<dbReference type="PRO" id="PR:Q9C9Z5"/>
<dbReference type="Proteomes" id="UP000006548">
    <property type="component" value="Chromosome 3"/>
</dbReference>
<dbReference type="ExpressionAtlas" id="Q9C9Z5">
    <property type="expression patterns" value="baseline and differential"/>
</dbReference>
<dbReference type="GO" id="GO:0005743">
    <property type="term" value="C:mitochondrial inner membrane"/>
    <property type="evidence" value="ECO:0007669"/>
    <property type="project" value="UniProtKB-SubCell"/>
</dbReference>
<dbReference type="GO" id="GO:0005739">
    <property type="term" value="C:mitochondrion"/>
    <property type="evidence" value="ECO:0000314"/>
    <property type="project" value="TAIR"/>
</dbReference>
<dbReference type="InterPro" id="IPR017384">
    <property type="entry name" value="NADH_Ub_cplx-1_asu_su-1"/>
</dbReference>
<dbReference type="PANTHER" id="PTHR17098:SF2">
    <property type="entry name" value="NADH DEHYDROGENASE [UBIQUINONE] 1 ALPHA SUBCOMPLEX SUBUNIT 1"/>
    <property type="match status" value="1"/>
</dbReference>
<dbReference type="PANTHER" id="PTHR17098">
    <property type="entry name" value="NADH-UBIQUINONE OXIDOREDUCTASE MWFE SUBUNIT"/>
    <property type="match status" value="1"/>
</dbReference>
<dbReference type="Pfam" id="PF15879">
    <property type="entry name" value="MWFE"/>
    <property type="match status" value="1"/>
</dbReference>
<proteinExistence type="evidence at protein level"/>